<name>TRMFO_HYDS0</name>
<feature type="chain" id="PRO_1000149473" description="Methylenetetrahydrofolate--tRNA-(uracil-5-)-methyltransferase TrmFO">
    <location>
        <begin position="1"/>
        <end position="457"/>
    </location>
</feature>
<feature type="region of interest" description="Disordered" evidence="2">
    <location>
        <begin position="38"/>
        <end position="58"/>
    </location>
</feature>
<feature type="compositionally biased region" description="Basic and acidic residues" evidence="2">
    <location>
        <begin position="40"/>
        <end position="52"/>
    </location>
</feature>
<feature type="binding site" evidence="1">
    <location>
        <begin position="7"/>
        <end position="12"/>
    </location>
    <ligand>
        <name>FAD</name>
        <dbReference type="ChEBI" id="CHEBI:57692"/>
    </ligand>
</feature>
<protein>
    <recommendedName>
        <fullName evidence="1">Methylenetetrahydrofolate--tRNA-(uracil-5-)-methyltransferase TrmFO</fullName>
        <ecNumber evidence="1">2.1.1.74</ecNumber>
    </recommendedName>
    <alternativeName>
        <fullName evidence="1">Folate-dependent tRNA (uracil-5-)-methyltransferase</fullName>
    </alternativeName>
    <alternativeName>
        <fullName evidence="1">Folate-dependent tRNA(M-5-U54)-methyltransferase</fullName>
    </alternativeName>
</protein>
<evidence type="ECO:0000255" key="1">
    <source>
        <dbReference type="HAMAP-Rule" id="MF_01037"/>
    </source>
</evidence>
<evidence type="ECO:0000256" key="2">
    <source>
        <dbReference type="SAM" id="MobiDB-lite"/>
    </source>
</evidence>
<reference key="1">
    <citation type="journal article" date="2009" name="J. Bacteriol.">
        <title>Complete and draft genome sequences of six members of the Aquificales.</title>
        <authorList>
            <person name="Reysenbach A.-L."/>
            <person name="Hamamura N."/>
            <person name="Podar M."/>
            <person name="Griffiths E."/>
            <person name="Ferreira S."/>
            <person name="Hochstein R."/>
            <person name="Heidelberg J."/>
            <person name="Johnson J."/>
            <person name="Mead D."/>
            <person name="Pohorille A."/>
            <person name="Sarmiento M."/>
            <person name="Schweighofer K."/>
            <person name="Seshadri R."/>
            <person name="Voytek M.A."/>
        </authorList>
    </citation>
    <scope>NUCLEOTIDE SEQUENCE [LARGE SCALE GENOMIC DNA]</scope>
    <source>
        <strain>Y04AAS1</strain>
    </source>
</reference>
<comment type="function">
    <text evidence="1">Catalyzes the folate-dependent formation of 5-methyl-uridine at position 54 (M-5-U54) in all tRNAs.</text>
</comment>
<comment type="catalytic activity">
    <reaction evidence="1">
        <text>uridine(54) in tRNA + (6R)-5,10-methylene-5,6,7,8-tetrahydrofolate + NADH + H(+) = 5-methyluridine(54) in tRNA + (6S)-5,6,7,8-tetrahydrofolate + NAD(+)</text>
        <dbReference type="Rhea" id="RHEA:16873"/>
        <dbReference type="Rhea" id="RHEA-COMP:10167"/>
        <dbReference type="Rhea" id="RHEA-COMP:10193"/>
        <dbReference type="ChEBI" id="CHEBI:15378"/>
        <dbReference type="ChEBI" id="CHEBI:15636"/>
        <dbReference type="ChEBI" id="CHEBI:57453"/>
        <dbReference type="ChEBI" id="CHEBI:57540"/>
        <dbReference type="ChEBI" id="CHEBI:57945"/>
        <dbReference type="ChEBI" id="CHEBI:65315"/>
        <dbReference type="ChEBI" id="CHEBI:74447"/>
        <dbReference type="EC" id="2.1.1.74"/>
    </reaction>
</comment>
<comment type="catalytic activity">
    <reaction evidence="1">
        <text>uridine(54) in tRNA + (6R)-5,10-methylene-5,6,7,8-tetrahydrofolate + NADPH + H(+) = 5-methyluridine(54) in tRNA + (6S)-5,6,7,8-tetrahydrofolate + NADP(+)</text>
        <dbReference type="Rhea" id="RHEA:62372"/>
        <dbReference type="Rhea" id="RHEA-COMP:10167"/>
        <dbReference type="Rhea" id="RHEA-COMP:10193"/>
        <dbReference type="ChEBI" id="CHEBI:15378"/>
        <dbReference type="ChEBI" id="CHEBI:15636"/>
        <dbReference type="ChEBI" id="CHEBI:57453"/>
        <dbReference type="ChEBI" id="CHEBI:57783"/>
        <dbReference type="ChEBI" id="CHEBI:58349"/>
        <dbReference type="ChEBI" id="CHEBI:65315"/>
        <dbReference type="ChEBI" id="CHEBI:74447"/>
        <dbReference type="EC" id="2.1.1.74"/>
    </reaction>
</comment>
<comment type="cofactor">
    <cofactor evidence="1">
        <name>FAD</name>
        <dbReference type="ChEBI" id="CHEBI:57692"/>
    </cofactor>
</comment>
<comment type="subcellular location">
    <subcellularLocation>
        <location evidence="1">Cytoplasm</location>
    </subcellularLocation>
</comment>
<comment type="similarity">
    <text evidence="1">Belongs to the MnmG family. TrmFO subfamily.</text>
</comment>
<proteinExistence type="inferred from homology"/>
<organism>
    <name type="scientific">Hydrogenobaculum sp. (strain Y04AAS1)</name>
    <dbReference type="NCBI Taxonomy" id="380749"/>
    <lineage>
        <taxon>Bacteria</taxon>
        <taxon>Pseudomonadati</taxon>
        <taxon>Aquificota</taxon>
        <taxon>Aquificia</taxon>
        <taxon>Aquificales</taxon>
        <taxon>Aquificaceae</taxon>
        <taxon>Hydrogenobaculum</taxon>
    </lineage>
</organism>
<sequence>MKVNVIGAGLAGSEAAYFLANKGIKVRMFEMRPITSHFTSRQDEKTGTHDVRNATQTRPITTTEAHKTDKFGELVCSNTLGSFEITTGAGLLKKEMELLNSLVIKAAKHSYVKAGSALAVDRNEFSDFITKTILSHPNIEVVREEVESLNENELNIVATGPLTSEKFSKYLKNLITDDYLYFYDAIAPIVEASSVDFSKGFWGSRYDKGDDYFNCTMTKEEYDIFYNELLKAEKVPTKDFERVVHFEGCLPIEEIASRGYETLVFGPMSPKGLKHHISKDVYAIVQLRKETKEGEALSLVGFQTKLTYKEQVRVFRLIPCLRNAVFSRLGSMHRNTFLQSNKLLKPTLELRKNPNILFAGQITGVEGYSASAATGIIAGINAWLKLEGKEPTTPPKTTMLGALLDYISSKEGELQPMNPVFGLLPDIEVHKKHKKLLKAYRALFDMKKFIEHHKIYD</sequence>
<accession>B4U7L4</accession>
<dbReference type="EC" id="2.1.1.74" evidence="1"/>
<dbReference type="EMBL" id="CP001130">
    <property type="protein sequence ID" value="ACG57125.1"/>
    <property type="molecule type" value="Genomic_DNA"/>
</dbReference>
<dbReference type="RefSeq" id="WP_012513481.1">
    <property type="nucleotide sequence ID" value="NC_011126.1"/>
</dbReference>
<dbReference type="SMR" id="B4U7L4"/>
<dbReference type="STRING" id="380749.HY04AAS1_0435"/>
<dbReference type="KEGG" id="hya:HY04AAS1_0435"/>
<dbReference type="eggNOG" id="COG1206">
    <property type="taxonomic scope" value="Bacteria"/>
</dbReference>
<dbReference type="HOGENOM" id="CLU_033057_1_0_0"/>
<dbReference type="OrthoDB" id="9803114at2"/>
<dbReference type="GO" id="GO:0005829">
    <property type="term" value="C:cytosol"/>
    <property type="evidence" value="ECO:0007669"/>
    <property type="project" value="TreeGrafter"/>
</dbReference>
<dbReference type="GO" id="GO:0050660">
    <property type="term" value="F:flavin adenine dinucleotide binding"/>
    <property type="evidence" value="ECO:0007669"/>
    <property type="project" value="UniProtKB-UniRule"/>
</dbReference>
<dbReference type="GO" id="GO:0047151">
    <property type="term" value="F:tRNA (uracil(54)-C5)-methyltransferase activity, 5,10-methylenetetrahydrofolate-dependent"/>
    <property type="evidence" value="ECO:0007669"/>
    <property type="project" value="UniProtKB-UniRule"/>
</dbReference>
<dbReference type="GO" id="GO:0030488">
    <property type="term" value="P:tRNA methylation"/>
    <property type="evidence" value="ECO:0007669"/>
    <property type="project" value="TreeGrafter"/>
</dbReference>
<dbReference type="GO" id="GO:0002098">
    <property type="term" value="P:tRNA wobble uridine modification"/>
    <property type="evidence" value="ECO:0007669"/>
    <property type="project" value="TreeGrafter"/>
</dbReference>
<dbReference type="Gene3D" id="3.50.50.60">
    <property type="entry name" value="FAD/NAD(P)-binding domain"/>
    <property type="match status" value="3"/>
</dbReference>
<dbReference type="HAMAP" id="MF_01037">
    <property type="entry name" value="TrmFO"/>
    <property type="match status" value="1"/>
</dbReference>
<dbReference type="InterPro" id="IPR036188">
    <property type="entry name" value="FAD/NAD-bd_sf"/>
</dbReference>
<dbReference type="InterPro" id="IPR002218">
    <property type="entry name" value="MnmG-rel"/>
</dbReference>
<dbReference type="InterPro" id="IPR020595">
    <property type="entry name" value="MnmG-rel_CS"/>
</dbReference>
<dbReference type="InterPro" id="IPR040131">
    <property type="entry name" value="MnmG_N"/>
</dbReference>
<dbReference type="InterPro" id="IPR004417">
    <property type="entry name" value="TrmFO"/>
</dbReference>
<dbReference type="NCBIfam" id="TIGR00137">
    <property type="entry name" value="gid_trmFO"/>
    <property type="match status" value="1"/>
</dbReference>
<dbReference type="NCBIfam" id="NF003739">
    <property type="entry name" value="PRK05335.1"/>
    <property type="match status" value="1"/>
</dbReference>
<dbReference type="PANTHER" id="PTHR11806">
    <property type="entry name" value="GLUCOSE INHIBITED DIVISION PROTEIN A"/>
    <property type="match status" value="1"/>
</dbReference>
<dbReference type="PANTHER" id="PTHR11806:SF2">
    <property type="entry name" value="METHYLENETETRAHYDROFOLATE--TRNA-(URACIL-5-)-METHYLTRANSFERASE TRMFO"/>
    <property type="match status" value="1"/>
</dbReference>
<dbReference type="Pfam" id="PF01134">
    <property type="entry name" value="GIDA"/>
    <property type="match status" value="1"/>
</dbReference>
<dbReference type="SUPFAM" id="SSF51905">
    <property type="entry name" value="FAD/NAD(P)-binding domain"/>
    <property type="match status" value="1"/>
</dbReference>
<dbReference type="PROSITE" id="PS01281">
    <property type="entry name" value="GIDA_2"/>
    <property type="match status" value="1"/>
</dbReference>
<gene>
    <name evidence="1" type="primary">trmFO</name>
    <name type="ordered locus">HY04AAS1_0435</name>
</gene>
<keyword id="KW-0963">Cytoplasm</keyword>
<keyword id="KW-0274">FAD</keyword>
<keyword id="KW-0285">Flavoprotein</keyword>
<keyword id="KW-0489">Methyltransferase</keyword>
<keyword id="KW-0520">NAD</keyword>
<keyword id="KW-0521">NADP</keyword>
<keyword id="KW-0808">Transferase</keyword>
<keyword id="KW-0819">tRNA processing</keyword>